<accession>Q18KN3</accession>
<proteinExistence type="inferred from homology"/>
<comment type="function">
    <text evidence="1">DNA-dependent RNA polymerase (RNAP) catalyzes the transcription of DNA into RNA using the four ribonucleoside triphosphates as substrates.</text>
</comment>
<comment type="catalytic activity">
    <reaction evidence="1">
        <text>RNA(n) + a ribonucleoside 5'-triphosphate = RNA(n+1) + diphosphate</text>
        <dbReference type="Rhea" id="RHEA:21248"/>
        <dbReference type="Rhea" id="RHEA-COMP:14527"/>
        <dbReference type="Rhea" id="RHEA-COMP:17342"/>
        <dbReference type="ChEBI" id="CHEBI:33019"/>
        <dbReference type="ChEBI" id="CHEBI:61557"/>
        <dbReference type="ChEBI" id="CHEBI:140395"/>
        <dbReference type="EC" id="2.7.7.6"/>
    </reaction>
</comment>
<comment type="cofactor">
    <cofactor evidence="1">
        <name>Zn(2+)</name>
        <dbReference type="ChEBI" id="CHEBI:29105"/>
    </cofactor>
    <text evidence="1">Binds 1 zinc ion.</text>
</comment>
<comment type="subunit">
    <text evidence="1">Part of the RNA polymerase complex.</text>
</comment>
<comment type="subcellular location">
    <subcellularLocation>
        <location evidence="1">Cytoplasm</location>
    </subcellularLocation>
</comment>
<comment type="similarity">
    <text evidence="1">Belongs to the archaeal Rpo12/eukaryotic RPC10 RNA polymerase subunit family.</text>
</comment>
<feature type="chain" id="PRO_1000061336" description="DNA-directed RNA polymerase subunit Rpo12">
    <location>
        <begin position="1"/>
        <end position="44"/>
    </location>
</feature>
<feature type="binding site" evidence="1">
    <location>
        <position position="8"/>
    </location>
    <ligand>
        <name>Zn(2+)</name>
        <dbReference type="ChEBI" id="CHEBI:29105"/>
    </ligand>
</feature>
<feature type="binding site" evidence="1">
    <location>
        <position position="22"/>
    </location>
    <ligand>
        <name>Zn(2+)</name>
        <dbReference type="ChEBI" id="CHEBI:29105"/>
    </ligand>
</feature>
<feature type="binding site" evidence="1">
    <location>
        <position position="25"/>
    </location>
    <ligand>
        <name>Zn(2+)</name>
        <dbReference type="ChEBI" id="CHEBI:29105"/>
    </ligand>
</feature>
<protein>
    <recommendedName>
        <fullName evidence="1">DNA-directed RNA polymerase subunit Rpo12</fullName>
        <ecNumber evidence="1">2.7.7.6</ecNumber>
    </recommendedName>
    <alternativeName>
        <fullName evidence="1">DNA-directed RNA polymerase subunit P</fullName>
    </alternativeName>
</protein>
<organism>
    <name type="scientific">Haloquadratum walsbyi (strain DSM 16790 / HBSQ001)</name>
    <dbReference type="NCBI Taxonomy" id="362976"/>
    <lineage>
        <taxon>Archaea</taxon>
        <taxon>Methanobacteriati</taxon>
        <taxon>Methanobacteriota</taxon>
        <taxon>Stenosarchaea group</taxon>
        <taxon>Halobacteria</taxon>
        <taxon>Halobacteriales</taxon>
        <taxon>Haloferacaceae</taxon>
        <taxon>Haloquadratum</taxon>
    </lineage>
</organism>
<keyword id="KW-0963">Cytoplasm</keyword>
<keyword id="KW-0240">DNA-directed RNA polymerase</keyword>
<keyword id="KW-0479">Metal-binding</keyword>
<keyword id="KW-0548">Nucleotidyltransferase</keyword>
<keyword id="KW-1185">Reference proteome</keyword>
<keyword id="KW-0804">Transcription</keyword>
<keyword id="KW-0808">Transferase</keyword>
<keyword id="KW-0862">Zinc</keyword>
<dbReference type="EC" id="2.7.7.6" evidence="1"/>
<dbReference type="EMBL" id="AM180088">
    <property type="protein sequence ID" value="CAJ51413.1"/>
    <property type="molecule type" value="Genomic_DNA"/>
</dbReference>
<dbReference type="RefSeq" id="WP_011570572.1">
    <property type="nucleotide sequence ID" value="NC_008212.1"/>
</dbReference>
<dbReference type="SMR" id="Q18KN3"/>
<dbReference type="STRING" id="362976.HQ_1284A"/>
<dbReference type="GeneID" id="4194645"/>
<dbReference type="KEGG" id="hwa:HQ_1284A"/>
<dbReference type="eggNOG" id="arCOG04341">
    <property type="taxonomic scope" value="Archaea"/>
</dbReference>
<dbReference type="HOGENOM" id="CLU_179456_2_1_2"/>
<dbReference type="Proteomes" id="UP000001975">
    <property type="component" value="Chromosome"/>
</dbReference>
<dbReference type="GO" id="GO:0005737">
    <property type="term" value="C:cytoplasm"/>
    <property type="evidence" value="ECO:0007669"/>
    <property type="project" value="UniProtKB-SubCell"/>
</dbReference>
<dbReference type="GO" id="GO:0000428">
    <property type="term" value="C:DNA-directed RNA polymerase complex"/>
    <property type="evidence" value="ECO:0007669"/>
    <property type="project" value="UniProtKB-KW"/>
</dbReference>
<dbReference type="GO" id="GO:0003677">
    <property type="term" value="F:DNA binding"/>
    <property type="evidence" value="ECO:0007669"/>
    <property type="project" value="InterPro"/>
</dbReference>
<dbReference type="GO" id="GO:0003899">
    <property type="term" value="F:DNA-directed RNA polymerase activity"/>
    <property type="evidence" value="ECO:0007669"/>
    <property type="project" value="UniProtKB-UniRule"/>
</dbReference>
<dbReference type="GO" id="GO:0008270">
    <property type="term" value="F:zinc ion binding"/>
    <property type="evidence" value="ECO:0007669"/>
    <property type="project" value="UniProtKB-UniRule"/>
</dbReference>
<dbReference type="GO" id="GO:0006351">
    <property type="term" value="P:DNA-templated transcription"/>
    <property type="evidence" value="ECO:0007669"/>
    <property type="project" value="UniProtKB-UniRule"/>
</dbReference>
<dbReference type="Gene3D" id="2.20.28.30">
    <property type="entry name" value="RNA polymerase ii, chain L"/>
    <property type="match status" value="1"/>
</dbReference>
<dbReference type="HAMAP" id="MF_00615">
    <property type="entry name" value="RNApol_arch_Rpo12"/>
    <property type="match status" value="1"/>
</dbReference>
<dbReference type="InterPro" id="IPR006591">
    <property type="entry name" value="RNAP_P/RPABC4"/>
</dbReference>
<dbReference type="InterPro" id="IPR029040">
    <property type="entry name" value="RPABC4/Spt4"/>
</dbReference>
<dbReference type="InterPro" id="IPR023464">
    <property type="entry name" value="Rpo12"/>
</dbReference>
<dbReference type="NCBIfam" id="NF001606">
    <property type="entry name" value="PRK00398.1-3"/>
    <property type="match status" value="1"/>
</dbReference>
<dbReference type="Pfam" id="PF03604">
    <property type="entry name" value="Zn_ribbon_RPAB4"/>
    <property type="match status" value="1"/>
</dbReference>
<dbReference type="SMART" id="SM00659">
    <property type="entry name" value="RPOLCX"/>
    <property type="match status" value="1"/>
</dbReference>
<dbReference type="SUPFAM" id="SSF63393">
    <property type="entry name" value="RNA polymerase subunits"/>
    <property type="match status" value="1"/>
</dbReference>
<gene>
    <name evidence="1" type="primary">rpo12</name>
    <name evidence="1" type="synonym">rpoP</name>
    <name type="ordered locus">HQ_1284A</name>
</gene>
<sequence length="44" mass="5141">MSYKCSRCKRDVELEEYGGVRCPFCGHRVLLKERAPEIKEVPVE</sequence>
<name>RPO12_HALWD</name>
<reference key="1">
    <citation type="journal article" date="2006" name="BMC Genomics">
        <title>The genome of the square archaeon Haloquadratum walsbyi: life at the limits of water activity.</title>
        <authorList>
            <person name="Bolhuis H."/>
            <person name="Palm P."/>
            <person name="Wende A."/>
            <person name="Falb M."/>
            <person name="Rampp M."/>
            <person name="Rodriguez-Valera F."/>
            <person name="Pfeiffer F."/>
            <person name="Oesterhelt D."/>
        </authorList>
    </citation>
    <scope>NUCLEOTIDE SEQUENCE [LARGE SCALE GENOMIC DNA]</scope>
    <source>
        <strain>DSM 16790 / HBSQ001</strain>
    </source>
</reference>
<evidence type="ECO:0000255" key="1">
    <source>
        <dbReference type="HAMAP-Rule" id="MF_00615"/>
    </source>
</evidence>